<feature type="chain" id="PRO_1000136179" description="Protein/nucleic acid deglycase HchA">
    <location>
        <begin position="1"/>
        <end position="283"/>
    </location>
</feature>
<feature type="active site" description="Nucleophile" evidence="1">
    <location>
        <position position="185"/>
    </location>
</feature>
<feature type="binding site" evidence="1">
    <location>
        <position position="86"/>
    </location>
    <ligand>
        <name>Zn(2+)</name>
        <dbReference type="ChEBI" id="CHEBI:29105"/>
    </ligand>
</feature>
<feature type="binding site" evidence="1">
    <location>
        <position position="91"/>
    </location>
    <ligand>
        <name>Zn(2+)</name>
        <dbReference type="ChEBI" id="CHEBI:29105"/>
    </ligand>
</feature>
<feature type="binding site" evidence="1">
    <location>
        <position position="123"/>
    </location>
    <ligand>
        <name>Zn(2+)</name>
        <dbReference type="ChEBI" id="CHEBI:29105"/>
    </ligand>
</feature>
<reference key="1">
    <citation type="journal article" date="2009" name="PLoS Genet.">
        <title>Organised genome dynamics in the Escherichia coli species results in highly diverse adaptive paths.</title>
        <authorList>
            <person name="Touchon M."/>
            <person name="Hoede C."/>
            <person name="Tenaillon O."/>
            <person name="Barbe V."/>
            <person name="Baeriswyl S."/>
            <person name="Bidet P."/>
            <person name="Bingen E."/>
            <person name="Bonacorsi S."/>
            <person name="Bouchier C."/>
            <person name="Bouvet O."/>
            <person name="Calteau A."/>
            <person name="Chiapello H."/>
            <person name="Clermont O."/>
            <person name="Cruveiller S."/>
            <person name="Danchin A."/>
            <person name="Diard M."/>
            <person name="Dossat C."/>
            <person name="Karoui M.E."/>
            <person name="Frapy E."/>
            <person name="Garry L."/>
            <person name="Ghigo J.M."/>
            <person name="Gilles A.M."/>
            <person name="Johnson J."/>
            <person name="Le Bouguenec C."/>
            <person name="Lescat M."/>
            <person name="Mangenot S."/>
            <person name="Martinez-Jehanne V."/>
            <person name="Matic I."/>
            <person name="Nassif X."/>
            <person name="Oztas S."/>
            <person name="Petit M.A."/>
            <person name="Pichon C."/>
            <person name="Rouy Z."/>
            <person name="Ruf C.S."/>
            <person name="Schneider D."/>
            <person name="Tourret J."/>
            <person name="Vacherie B."/>
            <person name="Vallenet D."/>
            <person name="Medigue C."/>
            <person name="Rocha E.P.C."/>
            <person name="Denamur E."/>
        </authorList>
    </citation>
    <scope>NUCLEOTIDE SEQUENCE [LARGE SCALE GENOMIC DNA]</scope>
    <source>
        <strain>UMN026 / ExPEC</strain>
    </source>
</reference>
<organism>
    <name type="scientific">Escherichia coli O17:K52:H18 (strain UMN026 / ExPEC)</name>
    <dbReference type="NCBI Taxonomy" id="585056"/>
    <lineage>
        <taxon>Bacteria</taxon>
        <taxon>Pseudomonadati</taxon>
        <taxon>Pseudomonadota</taxon>
        <taxon>Gammaproteobacteria</taxon>
        <taxon>Enterobacterales</taxon>
        <taxon>Enterobacteriaceae</taxon>
        <taxon>Escherichia</taxon>
    </lineage>
</organism>
<dbReference type="EC" id="3.1.2.-" evidence="1"/>
<dbReference type="EC" id="3.5.1.-" evidence="1"/>
<dbReference type="EC" id="3.5.1.124" evidence="1"/>
<dbReference type="EMBL" id="CU928163">
    <property type="protein sequence ID" value="CAR13448.1"/>
    <property type="molecule type" value="Genomic_DNA"/>
</dbReference>
<dbReference type="RefSeq" id="WP_000218214.1">
    <property type="nucleotide sequence ID" value="NC_011751.1"/>
</dbReference>
<dbReference type="RefSeq" id="YP_002412977.1">
    <property type="nucleotide sequence ID" value="NC_011751.1"/>
</dbReference>
<dbReference type="SMR" id="B7NBV8"/>
<dbReference type="STRING" id="585056.ECUMN_2258"/>
<dbReference type="MEROPS" id="C56.006"/>
<dbReference type="GeneID" id="75205795"/>
<dbReference type="KEGG" id="eum:ECUMN_2258"/>
<dbReference type="PATRIC" id="fig|585056.7.peg.2446"/>
<dbReference type="HOGENOM" id="CLU_066933_0_0_6"/>
<dbReference type="Proteomes" id="UP000007097">
    <property type="component" value="Chromosome"/>
</dbReference>
<dbReference type="GO" id="GO:0005737">
    <property type="term" value="C:cytoplasm"/>
    <property type="evidence" value="ECO:0007669"/>
    <property type="project" value="UniProtKB-SubCell"/>
</dbReference>
<dbReference type="GO" id="GO:0019172">
    <property type="term" value="F:glyoxalase III activity"/>
    <property type="evidence" value="ECO:0007669"/>
    <property type="project" value="TreeGrafter"/>
</dbReference>
<dbReference type="GO" id="GO:0036524">
    <property type="term" value="F:protein deglycase activity"/>
    <property type="evidence" value="ECO:0007669"/>
    <property type="project" value="UniProtKB-UniRule"/>
</dbReference>
<dbReference type="GO" id="GO:0016790">
    <property type="term" value="F:thiolester hydrolase activity"/>
    <property type="evidence" value="ECO:0007669"/>
    <property type="project" value="UniProtKB-UniRule"/>
</dbReference>
<dbReference type="GO" id="GO:0008270">
    <property type="term" value="F:zinc ion binding"/>
    <property type="evidence" value="ECO:0007669"/>
    <property type="project" value="UniProtKB-UniRule"/>
</dbReference>
<dbReference type="GO" id="GO:0006281">
    <property type="term" value="P:DNA repair"/>
    <property type="evidence" value="ECO:0007669"/>
    <property type="project" value="UniProtKB-UniRule"/>
</dbReference>
<dbReference type="GO" id="GO:0019243">
    <property type="term" value="P:methylglyoxal catabolic process to D-lactate via S-lactoyl-glutathione"/>
    <property type="evidence" value="ECO:0007669"/>
    <property type="project" value="TreeGrafter"/>
</dbReference>
<dbReference type="GO" id="GO:0030091">
    <property type="term" value="P:protein repair"/>
    <property type="evidence" value="ECO:0007669"/>
    <property type="project" value="UniProtKB-UniRule"/>
</dbReference>
<dbReference type="FunFam" id="3.40.50.880:FF:000026">
    <property type="entry name" value="Protein/nucleic acid deglycase HchA"/>
    <property type="match status" value="1"/>
</dbReference>
<dbReference type="Gene3D" id="3.40.50.880">
    <property type="match status" value="1"/>
</dbReference>
<dbReference type="HAMAP" id="MF_01046">
    <property type="entry name" value="Deglycase_HchA"/>
    <property type="match status" value="1"/>
</dbReference>
<dbReference type="InterPro" id="IPR029062">
    <property type="entry name" value="Class_I_gatase-like"/>
</dbReference>
<dbReference type="InterPro" id="IPR017283">
    <property type="entry name" value="HchA"/>
</dbReference>
<dbReference type="InterPro" id="IPR050325">
    <property type="entry name" value="Prot/Nucl_acid_deglycase"/>
</dbReference>
<dbReference type="NCBIfam" id="NF003168">
    <property type="entry name" value="PRK04155.1"/>
    <property type="match status" value="1"/>
</dbReference>
<dbReference type="PANTHER" id="PTHR48094">
    <property type="entry name" value="PROTEIN/NUCLEIC ACID DEGLYCASE DJ-1-RELATED"/>
    <property type="match status" value="1"/>
</dbReference>
<dbReference type="PANTHER" id="PTHR48094:SF20">
    <property type="entry name" value="PROTEIN_NUCLEIC ACID DEGLYCASE 1"/>
    <property type="match status" value="1"/>
</dbReference>
<dbReference type="PIRSF" id="PIRSF037798">
    <property type="entry name" value="Chaperone_HchA"/>
    <property type="match status" value="1"/>
</dbReference>
<dbReference type="SUPFAM" id="SSF52317">
    <property type="entry name" value="Class I glutamine amidotransferase-like"/>
    <property type="match status" value="1"/>
</dbReference>
<gene>
    <name evidence="1" type="primary">hchA</name>
    <name type="ordered locus">ECUMN_2258</name>
</gene>
<evidence type="ECO:0000255" key="1">
    <source>
        <dbReference type="HAMAP-Rule" id="MF_01046"/>
    </source>
</evidence>
<protein>
    <recommendedName>
        <fullName evidence="1">Protein/nucleic acid deglycase HchA</fullName>
        <ecNumber evidence="1">3.1.2.-</ecNumber>
        <ecNumber evidence="1">3.5.1.-</ecNumber>
        <ecNumber evidence="1">3.5.1.124</ecNumber>
    </recommendedName>
    <alternativeName>
        <fullName evidence="1">Maillard deglycase</fullName>
    </alternativeName>
</protein>
<name>HCHA_ECOLU</name>
<comment type="function">
    <text evidence="1">Protein and nucleotide deglycase that catalyzes the deglycation of the Maillard adducts formed between amino groups of proteins or nucleotides and reactive carbonyl groups of glyoxals. Thus, functions as a protein deglycase that repairs methylglyoxal- and glyoxal-glycated proteins, and releases repaired proteins and lactate or glycolate, respectively. Deglycates cysteine, arginine and lysine residues in proteins, and thus reactivates these proteins by reversing glycation by glyoxals. Acts on early glycation intermediates (hemithioacetals and aminocarbinols), preventing the formation of Schiff bases and advanced glycation endproducts (AGE). Also functions as a nucleotide deglycase able to repair glycated guanine in the free nucleotide pool (GTP, GDP, GMP, dGTP) and in DNA and RNA. Is thus involved in a major nucleotide repair system named guanine glycation repair (GG repair), dedicated to reversing methylglyoxal and glyoxal damage via nucleotide sanitization and direct nucleic acid repair. Plays an important role in protecting cells from carbonyl stress.</text>
</comment>
<comment type="catalytic activity">
    <reaction evidence="1">
        <text>N(omega)-(1-hydroxy-2-oxopropyl)-L-arginyl-[protein] + H2O = lactate + L-arginyl-[protein] + H(+)</text>
        <dbReference type="Rhea" id="RHEA:49548"/>
        <dbReference type="Rhea" id="RHEA-COMP:10532"/>
        <dbReference type="Rhea" id="RHEA-COMP:12428"/>
        <dbReference type="ChEBI" id="CHEBI:15377"/>
        <dbReference type="ChEBI" id="CHEBI:15378"/>
        <dbReference type="ChEBI" id="CHEBI:24996"/>
        <dbReference type="ChEBI" id="CHEBI:29965"/>
        <dbReference type="ChEBI" id="CHEBI:131708"/>
        <dbReference type="EC" id="3.5.1.124"/>
    </reaction>
</comment>
<comment type="catalytic activity">
    <reaction evidence="1">
        <text>N(6)-(1-hydroxy-2-oxopropyl)-L-lysyl-[protein] + H2O = lactate + L-lysyl-[protein] + H(+)</text>
        <dbReference type="Rhea" id="RHEA:49552"/>
        <dbReference type="Rhea" id="RHEA-COMP:9752"/>
        <dbReference type="Rhea" id="RHEA-COMP:12429"/>
        <dbReference type="ChEBI" id="CHEBI:15377"/>
        <dbReference type="ChEBI" id="CHEBI:15378"/>
        <dbReference type="ChEBI" id="CHEBI:24996"/>
        <dbReference type="ChEBI" id="CHEBI:29969"/>
        <dbReference type="ChEBI" id="CHEBI:131709"/>
        <dbReference type="EC" id="3.5.1.124"/>
    </reaction>
</comment>
<comment type="catalytic activity">
    <reaction evidence="1">
        <text>S-(1-hydroxy-2-oxopropyl)-L-cysteinyl-[protein] + H2O = lactate + L-cysteinyl-[protein] + H(+)</text>
        <dbReference type="Rhea" id="RHEA:49556"/>
        <dbReference type="Rhea" id="RHEA-COMP:10131"/>
        <dbReference type="Rhea" id="RHEA-COMP:12430"/>
        <dbReference type="ChEBI" id="CHEBI:15377"/>
        <dbReference type="ChEBI" id="CHEBI:15378"/>
        <dbReference type="ChEBI" id="CHEBI:24996"/>
        <dbReference type="ChEBI" id="CHEBI:29950"/>
        <dbReference type="ChEBI" id="CHEBI:131710"/>
        <dbReference type="EC" id="3.5.1.124"/>
    </reaction>
</comment>
<comment type="catalytic activity">
    <reaction evidence="1">
        <text>N(omega)-(1-hydroxy-2-oxoethyl)-L-arginyl-[protein] + H2O = L-arginyl-[protein] + glycolate + H(+)</text>
        <dbReference type="Rhea" id="RHEA:57188"/>
        <dbReference type="Rhea" id="RHEA-COMP:10532"/>
        <dbReference type="Rhea" id="RHEA-COMP:14844"/>
        <dbReference type="ChEBI" id="CHEBI:15377"/>
        <dbReference type="ChEBI" id="CHEBI:15378"/>
        <dbReference type="ChEBI" id="CHEBI:29805"/>
        <dbReference type="ChEBI" id="CHEBI:29965"/>
        <dbReference type="ChEBI" id="CHEBI:141553"/>
        <dbReference type="EC" id="3.5.1.124"/>
    </reaction>
</comment>
<comment type="catalytic activity">
    <reaction evidence="1">
        <text>N(6)-(1-hydroxy-2-oxoethyl)-L-lysyl-[protein] + H2O = glycolate + L-lysyl-[protein] + H(+)</text>
        <dbReference type="Rhea" id="RHEA:57192"/>
        <dbReference type="Rhea" id="RHEA-COMP:9752"/>
        <dbReference type="Rhea" id="RHEA-COMP:14845"/>
        <dbReference type="ChEBI" id="CHEBI:15377"/>
        <dbReference type="ChEBI" id="CHEBI:15378"/>
        <dbReference type="ChEBI" id="CHEBI:29805"/>
        <dbReference type="ChEBI" id="CHEBI:29969"/>
        <dbReference type="ChEBI" id="CHEBI:141554"/>
        <dbReference type="EC" id="3.5.1.124"/>
    </reaction>
</comment>
<comment type="catalytic activity">
    <reaction evidence="1">
        <text>S-(1-hydroxy-2-oxoethyl)-L-cysteinyl-[protein] + H2O = glycolate + L-cysteinyl-[protein] + H(+)</text>
        <dbReference type="Rhea" id="RHEA:57196"/>
        <dbReference type="Rhea" id="RHEA-COMP:10131"/>
        <dbReference type="Rhea" id="RHEA-COMP:14846"/>
        <dbReference type="ChEBI" id="CHEBI:15377"/>
        <dbReference type="ChEBI" id="CHEBI:15378"/>
        <dbReference type="ChEBI" id="CHEBI:29805"/>
        <dbReference type="ChEBI" id="CHEBI:29950"/>
        <dbReference type="ChEBI" id="CHEBI:141555"/>
        <dbReference type="EC" id="3.5.1.124"/>
    </reaction>
</comment>
<comment type="catalytic activity">
    <reaction evidence="1">
        <text>N(2)-(1-hydroxy-2-oxopropyl)-dGTP + H2O = lactate + dGTP + H(+)</text>
        <dbReference type="Rhea" id="RHEA:57244"/>
        <dbReference type="ChEBI" id="CHEBI:15377"/>
        <dbReference type="ChEBI" id="CHEBI:15378"/>
        <dbReference type="ChEBI" id="CHEBI:24996"/>
        <dbReference type="ChEBI" id="CHEBI:61429"/>
        <dbReference type="ChEBI" id="CHEBI:141569"/>
    </reaction>
</comment>
<comment type="catalytic activity">
    <reaction evidence="1">
        <text>N(2)-(1-hydroxy-2-oxopropyl)-GTP + H2O = lactate + GTP + H(+)</text>
        <dbReference type="Rhea" id="RHEA:57256"/>
        <dbReference type="ChEBI" id="CHEBI:15377"/>
        <dbReference type="ChEBI" id="CHEBI:15378"/>
        <dbReference type="ChEBI" id="CHEBI:24996"/>
        <dbReference type="ChEBI" id="CHEBI:37565"/>
        <dbReference type="ChEBI" id="CHEBI:141570"/>
    </reaction>
</comment>
<comment type="catalytic activity">
    <reaction evidence="1">
        <text>N(2)-(1-hydroxy-2-oxopropyl)-GDP + H2O = lactate + GDP + H(+)</text>
        <dbReference type="Rhea" id="RHEA:57260"/>
        <dbReference type="ChEBI" id="CHEBI:15377"/>
        <dbReference type="ChEBI" id="CHEBI:15378"/>
        <dbReference type="ChEBI" id="CHEBI:24996"/>
        <dbReference type="ChEBI" id="CHEBI:58189"/>
        <dbReference type="ChEBI" id="CHEBI:141573"/>
    </reaction>
</comment>
<comment type="catalytic activity">
    <reaction evidence="1">
        <text>N(2)-(1-hydroxy-2-oxopropyl)-GMP + H2O = lactate + GMP + H(+)</text>
        <dbReference type="Rhea" id="RHEA:57268"/>
        <dbReference type="ChEBI" id="CHEBI:15377"/>
        <dbReference type="ChEBI" id="CHEBI:15378"/>
        <dbReference type="ChEBI" id="CHEBI:24996"/>
        <dbReference type="ChEBI" id="CHEBI:58115"/>
        <dbReference type="ChEBI" id="CHEBI:141575"/>
    </reaction>
</comment>
<comment type="catalytic activity">
    <reaction evidence="1">
        <text>N(2)-(1-hydroxy-2-oxoethyl)-dGTP + H2O = dGTP + glycolate + H(+)</text>
        <dbReference type="Rhea" id="RHEA:57248"/>
        <dbReference type="ChEBI" id="CHEBI:15377"/>
        <dbReference type="ChEBI" id="CHEBI:15378"/>
        <dbReference type="ChEBI" id="CHEBI:29805"/>
        <dbReference type="ChEBI" id="CHEBI:61429"/>
        <dbReference type="ChEBI" id="CHEBI:141572"/>
    </reaction>
</comment>
<comment type="catalytic activity">
    <reaction evidence="1">
        <text>N(2)-(1-hydroxy-2-oxoethyl)-GTP + H2O = glycolate + GTP + H(+)</text>
        <dbReference type="Rhea" id="RHEA:57252"/>
        <dbReference type="ChEBI" id="CHEBI:15377"/>
        <dbReference type="ChEBI" id="CHEBI:15378"/>
        <dbReference type="ChEBI" id="CHEBI:29805"/>
        <dbReference type="ChEBI" id="CHEBI:37565"/>
        <dbReference type="ChEBI" id="CHEBI:141571"/>
    </reaction>
</comment>
<comment type="catalytic activity">
    <reaction evidence="1">
        <text>N(2)-(1-hydroxy-2-oxoethyl)-GDP + H2O = glycolate + GDP + H(+)</text>
        <dbReference type="Rhea" id="RHEA:57264"/>
        <dbReference type="ChEBI" id="CHEBI:15377"/>
        <dbReference type="ChEBI" id="CHEBI:15378"/>
        <dbReference type="ChEBI" id="CHEBI:29805"/>
        <dbReference type="ChEBI" id="CHEBI:58189"/>
        <dbReference type="ChEBI" id="CHEBI:141574"/>
    </reaction>
</comment>
<comment type="catalytic activity">
    <reaction evidence="1">
        <text>N(2)-(1-hydroxy-2-oxoethyl)-GMP + H2O = glycolate + GMP + H(+)</text>
        <dbReference type="Rhea" id="RHEA:57304"/>
        <dbReference type="ChEBI" id="CHEBI:15377"/>
        <dbReference type="ChEBI" id="CHEBI:15378"/>
        <dbReference type="ChEBI" id="CHEBI:29805"/>
        <dbReference type="ChEBI" id="CHEBI:58115"/>
        <dbReference type="ChEBI" id="CHEBI:141576"/>
    </reaction>
</comment>
<comment type="catalytic activity">
    <reaction evidence="1">
        <text>an N(2)-(1-hydroxy-2-oxopropyl)-guanosine in RNA + H2O = a guanosine in RNA + lactate + H(+)</text>
        <dbReference type="Rhea" id="RHEA:57288"/>
        <dbReference type="Rhea" id="RHEA-COMP:14855"/>
        <dbReference type="Rhea" id="RHEA-COMP:14858"/>
        <dbReference type="ChEBI" id="CHEBI:15377"/>
        <dbReference type="ChEBI" id="CHEBI:15378"/>
        <dbReference type="ChEBI" id="CHEBI:24996"/>
        <dbReference type="ChEBI" id="CHEBI:74269"/>
        <dbReference type="ChEBI" id="CHEBI:141580"/>
    </reaction>
</comment>
<comment type="catalytic activity">
    <reaction evidence="1">
        <text>an N(2)-(1-hydroxy-2-oxopropyl)-2'-deoxyguanosine in DNA + H2O = a 2'-deoxyguanosine in DNA + lactate + H(+)</text>
        <dbReference type="Rhea" id="RHEA:57300"/>
        <dbReference type="Rhea" id="RHEA-COMP:11367"/>
        <dbReference type="Rhea" id="RHEA-COMP:14856"/>
        <dbReference type="ChEBI" id="CHEBI:15377"/>
        <dbReference type="ChEBI" id="CHEBI:15378"/>
        <dbReference type="ChEBI" id="CHEBI:24996"/>
        <dbReference type="ChEBI" id="CHEBI:85445"/>
        <dbReference type="ChEBI" id="CHEBI:141578"/>
    </reaction>
</comment>
<comment type="catalytic activity">
    <reaction evidence="1">
        <text>an N(2)-(1-hydroxy-2-oxoethyl)-guanosine in RNA + H2O = a guanosine in RNA + glycolate + H(+)</text>
        <dbReference type="Rhea" id="RHEA:57292"/>
        <dbReference type="Rhea" id="RHEA-COMP:14855"/>
        <dbReference type="Rhea" id="RHEA-COMP:14859"/>
        <dbReference type="ChEBI" id="CHEBI:15377"/>
        <dbReference type="ChEBI" id="CHEBI:15378"/>
        <dbReference type="ChEBI" id="CHEBI:29805"/>
        <dbReference type="ChEBI" id="CHEBI:74269"/>
        <dbReference type="ChEBI" id="CHEBI:141581"/>
    </reaction>
</comment>
<comment type="catalytic activity">
    <reaction evidence="1">
        <text>an N(2)-(1-hydroxy-2-oxoethyl)-2'-deoxyguanosine in DNA + H2O = a 2'-deoxyguanosine in DNA + glycolate + H(+)</text>
        <dbReference type="Rhea" id="RHEA:57296"/>
        <dbReference type="Rhea" id="RHEA-COMP:11367"/>
        <dbReference type="Rhea" id="RHEA-COMP:14857"/>
        <dbReference type="ChEBI" id="CHEBI:15377"/>
        <dbReference type="ChEBI" id="CHEBI:15378"/>
        <dbReference type="ChEBI" id="CHEBI:29805"/>
        <dbReference type="ChEBI" id="CHEBI:85445"/>
        <dbReference type="ChEBI" id="CHEBI:141579"/>
    </reaction>
</comment>
<comment type="subunit">
    <text evidence="1">Homodimer.</text>
</comment>
<comment type="subcellular location">
    <subcellularLocation>
        <location evidence="1">Cytoplasm</location>
    </subcellularLocation>
</comment>
<comment type="induction">
    <text evidence="1">By heat shock.</text>
</comment>
<comment type="similarity">
    <text evidence="1">Belongs to the peptidase C56 family. HchA subfamily.</text>
</comment>
<accession>B7NBV8</accession>
<keyword id="KW-0963">Cytoplasm</keyword>
<keyword id="KW-0227">DNA damage</keyword>
<keyword id="KW-0234">DNA repair</keyword>
<keyword id="KW-0378">Hydrolase</keyword>
<keyword id="KW-0479">Metal-binding</keyword>
<keyword id="KW-0346">Stress response</keyword>
<keyword id="KW-0862">Zinc</keyword>
<proteinExistence type="inferred from homology"/>
<sequence>MTVQTSKNPQVDIAEDNAFFPSEYSLSQYTSPVSDLDGVDYPKPYRGKHKILVIAADERYLPTDNGKLFSTGNHPIETLLPLYHLHAAGFEFEVATISGLMTKFEYWAMPHKDEKVMPFFEQHKSLFRNPKKLADVVASLNADSEYAAIFVPGGHGALIGLPESQDVAAALQWAIKNDRFVISLCHGPAAFLALRHGDNPLNGYSICAFPDAADKQTPEIGYMPGHLTWYFGEELKKMGMNIINDDITGRVHKDRKVLTGDSPFAANALGKLAAQEMLAAYAG</sequence>